<name>POLS_IBDV</name>
<feature type="chain" id="PRO_0000378356" description="Structural polyprotein">
    <location>
        <begin position="1"/>
        <end position="1012"/>
    </location>
</feature>
<feature type="chain" id="PRO_0000378357" description="Precursor of VP2">
    <location>
        <begin position="1"/>
        <end position="512"/>
    </location>
</feature>
<feature type="chain" id="PRO_0000036776" description="Capsid protein VP2">
    <location>
        <begin position="1"/>
        <end position="441"/>
    </location>
</feature>
<feature type="peptide" id="PRO_0000227849" description="Structural peptide 1" evidence="1">
    <location>
        <begin position="442"/>
        <end position="487"/>
    </location>
</feature>
<feature type="peptide" id="PRO_0000227850" description="Structural peptide 2" evidence="1">
    <location>
        <begin position="488"/>
        <end position="494"/>
    </location>
</feature>
<feature type="peptide" id="PRO_0000227851" description="Structural peptide 3" evidence="1">
    <location>
        <begin position="495"/>
        <end position="501"/>
    </location>
</feature>
<feature type="peptide" id="PRO_0000227852" description="Structural peptide 4" evidence="1">
    <location>
        <begin position="502"/>
        <end position="512"/>
    </location>
</feature>
<feature type="chain" id="PRO_0000227853" description="Protease VP4">
    <location>
        <begin position="513"/>
        <end position="755"/>
    </location>
</feature>
<feature type="chain" id="PRO_0000227854" description="Capsid protein VP3">
    <location>
        <begin position="756"/>
        <end position="1012"/>
    </location>
</feature>
<feature type="domain" description="Peptidase S50" evidence="2">
    <location>
        <begin position="513"/>
        <end position="755"/>
    </location>
</feature>
<feature type="region of interest" description="Disordered" evidence="3">
    <location>
        <begin position="969"/>
        <end position="1012"/>
    </location>
</feature>
<feature type="region of interest" description="Interaction with VP1 protein">
    <location>
        <begin position="1003"/>
        <end position="1012"/>
    </location>
</feature>
<feature type="compositionally biased region" description="Basic residues" evidence="3">
    <location>
        <begin position="975"/>
        <end position="986"/>
    </location>
</feature>
<feature type="active site" description="Nucleophile" evidence="2">
    <location>
        <position position="652"/>
    </location>
</feature>
<feature type="active site" evidence="2">
    <location>
        <position position="692"/>
    </location>
</feature>
<feature type="binding site" evidence="1">
    <location>
        <position position="30"/>
    </location>
    <ligand>
        <name>a divalent metal cation</name>
        <dbReference type="ChEBI" id="CHEBI:60240"/>
        <note>ligand shared between trimeric partners</note>
    </ligand>
</feature>
<feature type="site" description="Cleavage; by protease VP4" evidence="1">
    <location>
        <begin position="441"/>
        <end position="442"/>
    </location>
</feature>
<feature type="site" description="Cleavage; by protease VP4" evidence="1">
    <location>
        <begin position="487"/>
        <end position="488"/>
    </location>
</feature>
<feature type="site" description="Cleavage; by protease VP4" evidence="1">
    <location>
        <begin position="494"/>
        <end position="495"/>
    </location>
</feature>
<feature type="site" description="Cleavage; by protease VP4" evidence="1">
    <location>
        <begin position="501"/>
        <end position="502"/>
    </location>
</feature>
<feature type="site" description="Cleavage; by protease VP4" evidence="1">
    <location>
        <begin position="512"/>
        <end position="513"/>
    </location>
</feature>
<feature type="site" description="Cleavage; by protease VP4" evidence="1">
    <location>
        <begin position="755"/>
        <end position="756"/>
    </location>
</feature>
<feature type="sequence variant" description="In strain: Isolate Indian.">
    <original>Y</original>
    <variation>L</variation>
    <location>
        <position position="80"/>
    </location>
</feature>
<feature type="sequence variant" description="In strain: Isolate Indian.">
    <original>H</original>
    <variation>Q</variation>
    <location>
        <position position="253"/>
    </location>
</feature>
<feature type="sequence variant" description="In strain: Isolate Indian.">
    <original>L</original>
    <variation>F</variation>
    <location>
        <position position="263"/>
    </location>
</feature>
<feature type="sequence variant" description="In strain: Isolate Indian.">
    <original>A</original>
    <variation>T</variation>
    <location>
        <position position="270"/>
    </location>
</feature>
<feature type="sequence variant" description="In strain: Isolate Indian.">
    <original>N</original>
    <variation>D</variation>
    <location>
        <position position="279"/>
    </location>
</feature>
<feature type="sequence variant" description="In strain: Isolate Indian.">
    <original>T</original>
    <variation>A</variation>
    <location>
        <position position="284"/>
    </location>
</feature>
<feature type="sequence variant" description="In strain: Isolate Indian.">
    <original>L</original>
    <variation>M</variation>
    <location>
        <position position="290"/>
    </location>
</feature>
<feature type="sequence variant" description="In strain: Isolate Indian.">
    <original>I</original>
    <variation>V</variation>
    <location>
        <position position="312"/>
    </location>
</feature>
<feature type="sequence variant" description="In strain: Isolate Indian.">
    <original>R</original>
    <variation>S</variation>
    <location>
        <position position="330"/>
    </location>
</feature>
<feature type="sequence variant" description="In strain: Isolate Indian.">
    <original>G</original>
    <variation>A</variation>
    <location>
        <position position="409"/>
    </location>
</feature>
<feature type="helix" evidence="5">
    <location>
        <begin position="13"/>
        <end position="19"/>
    </location>
</feature>
<feature type="helix" evidence="5">
    <location>
        <begin position="21"/>
        <end position="23"/>
    </location>
</feature>
<feature type="strand" evidence="5">
    <location>
        <begin position="36"/>
        <end position="48"/>
    </location>
</feature>
<feature type="strand" evidence="7">
    <location>
        <begin position="51"/>
        <end position="53"/>
    </location>
</feature>
<feature type="strand" evidence="5">
    <location>
        <begin position="55"/>
        <end position="59"/>
    </location>
</feature>
<feature type="strand" evidence="5">
    <location>
        <begin position="64"/>
        <end position="74"/>
    </location>
</feature>
<feature type="strand" evidence="5">
    <location>
        <begin position="80"/>
        <end position="87"/>
    </location>
</feature>
<feature type="helix" evidence="5">
    <location>
        <begin position="92"/>
        <end position="94"/>
    </location>
</feature>
<feature type="strand" evidence="5">
    <location>
        <begin position="96"/>
        <end position="110"/>
    </location>
</feature>
<feature type="strand" evidence="5">
    <location>
        <begin position="123"/>
        <end position="131"/>
    </location>
</feature>
<feature type="helix" evidence="5">
    <location>
        <begin position="133"/>
        <end position="135"/>
    </location>
</feature>
<feature type="helix" evidence="5">
    <location>
        <begin position="143"/>
        <end position="146"/>
    </location>
</feature>
<feature type="helix" evidence="5">
    <location>
        <begin position="151"/>
        <end position="153"/>
    </location>
</feature>
<feature type="strand" evidence="5">
    <location>
        <begin position="154"/>
        <end position="159"/>
    </location>
</feature>
<feature type="turn" evidence="5">
    <location>
        <begin position="160"/>
        <end position="162"/>
    </location>
</feature>
<feature type="strand" evidence="5">
    <location>
        <begin position="164"/>
        <end position="167"/>
    </location>
</feature>
<feature type="strand" evidence="5">
    <location>
        <begin position="204"/>
        <end position="218"/>
    </location>
</feature>
<feature type="strand" evidence="5">
    <location>
        <begin position="225"/>
        <end position="238"/>
    </location>
</feature>
<feature type="strand" evidence="5">
    <location>
        <begin position="240"/>
        <end position="249"/>
    </location>
</feature>
<feature type="strand" evidence="5">
    <location>
        <begin position="255"/>
        <end position="265"/>
    </location>
</feature>
<feature type="strand" evidence="5">
    <location>
        <begin position="270"/>
        <end position="277"/>
    </location>
</feature>
<feature type="strand" evidence="5">
    <location>
        <begin position="288"/>
        <end position="296"/>
    </location>
</feature>
<feature type="helix" evidence="5">
    <location>
        <begin position="298"/>
        <end position="300"/>
    </location>
</feature>
<feature type="strand" evidence="5">
    <location>
        <begin position="305"/>
        <end position="318"/>
    </location>
</feature>
<feature type="strand" evidence="5">
    <location>
        <begin position="325"/>
        <end position="337"/>
    </location>
</feature>
<feature type="turn" evidence="5">
    <location>
        <begin position="338"/>
        <end position="341"/>
    </location>
</feature>
<feature type="turn" evidence="5">
    <location>
        <begin position="343"/>
        <end position="345"/>
    </location>
</feature>
<feature type="strand" evidence="5">
    <location>
        <begin position="349"/>
        <end position="356"/>
    </location>
</feature>
<feature type="strand" evidence="5">
    <location>
        <begin position="362"/>
        <end position="375"/>
    </location>
</feature>
<feature type="helix" evidence="5">
    <location>
        <begin position="379"/>
        <end position="381"/>
    </location>
</feature>
<feature type="helix" evidence="5">
    <location>
        <begin position="394"/>
        <end position="403"/>
    </location>
</feature>
<feature type="helix" evidence="5">
    <location>
        <begin position="405"/>
        <end position="408"/>
    </location>
</feature>
<feature type="strand" evidence="5">
    <location>
        <begin position="412"/>
        <end position="415"/>
    </location>
</feature>
<feature type="helix" evidence="5">
    <location>
        <begin position="416"/>
        <end position="425"/>
    </location>
</feature>
<feature type="turn" evidence="5">
    <location>
        <begin position="434"/>
        <end position="438"/>
    </location>
</feature>
<feature type="helix" evidence="6">
    <location>
        <begin position="444"/>
        <end position="454"/>
    </location>
</feature>
<feature type="helix" evidence="6">
    <location>
        <begin position="456"/>
        <end position="462"/>
    </location>
</feature>
<feature type="helix" evidence="6">
    <location>
        <begin position="468"/>
        <end position="474"/>
    </location>
</feature>
<feature type="helix" evidence="6">
    <location>
        <begin position="476"/>
        <end position="481"/>
    </location>
</feature>
<feature type="strand" evidence="8">
    <location>
        <begin position="757"/>
        <end position="759"/>
    </location>
</feature>
<feature type="helix" evidence="9">
    <location>
        <begin position="763"/>
        <end position="776"/>
    </location>
</feature>
<feature type="helix" evidence="9">
    <location>
        <begin position="780"/>
        <end position="794"/>
    </location>
</feature>
<feature type="helix" evidence="9">
    <location>
        <begin position="798"/>
        <end position="807"/>
    </location>
</feature>
<feature type="helix" evidence="9">
    <location>
        <begin position="812"/>
        <end position="819"/>
    </location>
</feature>
<feature type="helix" evidence="10">
    <location>
        <begin position="847"/>
        <end position="864"/>
    </location>
</feature>
<feature type="helix" evidence="10">
    <location>
        <begin position="872"/>
        <end position="877"/>
    </location>
</feature>
<feature type="helix" evidence="10">
    <location>
        <begin position="885"/>
        <end position="894"/>
    </location>
</feature>
<feature type="turn" evidence="10">
    <location>
        <begin position="905"/>
        <end position="909"/>
    </location>
</feature>
<feature type="helix" evidence="10">
    <location>
        <begin position="918"/>
        <end position="929"/>
    </location>
</feature>
<feature type="helix" evidence="10">
    <location>
        <begin position="939"/>
        <end position="951"/>
    </location>
</feature>
<feature type="turn" evidence="10">
    <location>
        <begin position="952"/>
        <end position="954"/>
    </location>
</feature>
<feature type="helix" evidence="10">
    <location>
        <begin position="959"/>
        <end position="972"/>
    </location>
</feature>
<reference key="1">
    <citation type="journal article" date="1999" name="Virology">
        <title>Efficient rescue of infectious bursal disease virus from cloned cDNA: evidence for involvement of the 3'-terminal sequence in genome replication.</title>
        <authorList>
            <person name="Boot H.J."/>
            <person name="ter Huurne A.A."/>
            <person name="Peeters B.P.H."/>
            <person name="Gielkens A.L."/>
        </authorList>
    </citation>
    <scope>NUCLEOTIDE SEQUENCE [MRNA]</scope>
    <source>
        <strain>Isolate CEF94</strain>
    </source>
</reference>
<reference key="2">
    <citation type="submission" date="2004-01" db="EMBL/GenBank/DDBJ databases">
        <title>Cloning of VP2 gene of infectious bursal disease virus in a mammalian expression vector for use as DNA vaccine.</title>
        <authorList>
            <person name="Chauhan S."/>
            <person name="Rai A."/>
            <person name="Rai N."/>
            <person name="Gupta P.K."/>
        </authorList>
    </citation>
    <scope>NUCLEOTIDE SEQUENCE [GENOMIC RNA] OF 1-453</scope>
    <source>
        <strain>Isolate Indian</strain>
    </source>
</reference>
<reference key="3">
    <citation type="journal article" date="2002" name="J. Virol.">
        <title>Infectious bursal disease virus capsid protein VP3 interacts both with VP1, the RNA-dependent RNA polymerase, and with viral double-stranded RNA.</title>
        <authorList>
            <person name="Tacken M.G."/>
            <person name="Peeters B.P.H."/>
            <person name="Thomas A.A.M."/>
            <person name="Rottier P.J.M."/>
            <person name="Boot H.J."/>
        </authorList>
    </citation>
    <scope>INTERACTION OF VP3 WITH VP1</scope>
    <scope>RNA-BINDING</scope>
    <source>
        <strain>Isolate CEF94</strain>
    </source>
</reference>
<reference key="4">
    <citation type="journal article" date="2006" name="J. Virol.">
        <title>The 2.6-Angstrom structure of infectious bursal disease virus-derived T=1 particles reveals new stabilizing elements of the virus capsid.</title>
        <authorList>
            <person name="Garriga D."/>
            <person name="Querol-Audi J."/>
            <person name="Abaitua F."/>
            <person name="Saugar I."/>
            <person name="Pous J."/>
            <person name="Verdaguer N."/>
            <person name="Caston J.R."/>
            <person name="Rodriguez J.F."/>
        </authorList>
    </citation>
    <scope>X-RAY CRYSTALLOGRAPHY (2.6 ANGSTROMS) OF 1-456</scope>
</reference>
<reference key="5">
    <citation type="journal article" date="2007" name="J. Biol. Chem.">
        <title>Infectious bursal disease virus, a non-enveloped virus, possesses a capsid-associated peptide that deforms and perforates biological membranes.</title>
        <authorList>
            <person name="Galloux M."/>
            <person name="Libersou S."/>
            <person name="Morellet N."/>
            <person name="Bouaziz S."/>
            <person name="Da Costa B."/>
            <person name="Ouldali M."/>
            <person name="Lepault J."/>
            <person name="Delmas B."/>
        </authorList>
    </citation>
    <scope>STRUCTURE BY NMR OF 442-487</scope>
</reference>
<reference key="6">
    <citation type="journal article" date="2009" name="J. Biol. Chem.">
        <title>Autoproteolytic activity derived from the infectious bursal disease virus capsid protein.</title>
        <authorList>
            <person name="Irigoyen N."/>
            <person name="Garriga D."/>
            <person name="Navarro A."/>
            <person name="Verdaguer N."/>
            <person name="Rodriguez J.F."/>
            <person name="Caston J.R."/>
        </authorList>
    </citation>
    <scope>X-RAY CRYSTALLOGRAPHY (3.1 ANGSTROMS) OF 1-452</scope>
</reference>
<evidence type="ECO:0000250" key="1"/>
<evidence type="ECO:0000255" key="2">
    <source>
        <dbReference type="PROSITE-ProRule" id="PRU00881"/>
    </source>
</evidence>
<evidence type="ECO:0000256" key="3">
    <source>
        <dbReference type="SAM" id="MobiDB-lite"/>
    </source>
</evidence>
<evidence type="ECO:0000305" key="4"/>
<evidence type="ECO:0007829" key="5">
    <source>
        <dbReference type="PDB" id="2GSY"/>
    </source>
</evidence>
<evidence type="ECO:0007829" key="6">
    <source>
        <dbReference type="PDB" id="2IMU"/>
    </source>
</evidence>
<evidence type="ECO:0007829" key="7">
    <source>
        <dbReference type="PDB" id="3FBM"/>
    </source>
</evidence>
<evidence type="ECO:0007829" key="8">
    <source>
        <dbReference type="PDB" id="9EQN"/>
    </source>
</evidence>
<evidence type="ECO:0007829" key="9">
    <source>
        <dbReference type="PDB" id="9EQO"/>
    </source>
</evidence>
<evidence type="ECO:0007829" key="10">
    <source>
        <dbReference type="PDB" id="9EQP"/>
    </source>
</evidence>
<protein>
    <recommendedName>
        <fullName>Structural polyprotein</fullName>
        <shortName>PP</shortName>
    </recommendedName>
    <component>
        <recommendedName>
            <fullName>Precursor of VP2</fullName>
            <shortName>Pre-VP2</shortName>
        </recommendedName>
    </component>
    <component>
        <recommendedName>
            <fullName>Capsid protein VP2</fullName>
        </recommendedName>
    </component>
    <component>
        <recommendedName>
            <fullName>Structural peptide 1</fullName>
            <shortName>p1</shortName>
        </recommendedName>
        <alternativeName>
            <fullName>pep46</fullName>
        </alternativeName>
    </component>
    <component>
        <recommendedName>
            <fullName>Structural peptide 2</fullName>
            <shortName>p2</shortName>
        </recommendedName>
        <alternativeName>
            <fullName>pep7a</fullName>
        </alternativeName>
    </component>
    <component>
        <recommendedName>
            <fullName>Structural peptide 3</fullName>
            <shortName>p3</shortName>
        </recommendedName>
        <alternativeName>
            <fullName>pep7b</fullName>
        </alternativeName>
    </component>
    <component>
        <recommendedName>
            <fullName>Structural peptide 4</fullName>
            <shortName>p4</shortName>
        </recommendedName>
        <alternativeName>
            <fullName>pep11</fullName>
        </alternativeName>
    </component>
    <component>
        <recommendedName>
            <fullName>Protease VP4</fullName>
            <ecNumber>3.4.21.-</ecNumber>
        </recommendedName>
        <alternativeName>
            <fullName>Non-structural protein VP4</fullName>
            <shortName>NS</shortName>
        </alternativeName>
    </component>
    <component>
        <recommendedName>
            <fullName>Capsid protein VP3</fullName>
        </recommendedName>
    </component>
</protein>
<organismHost>
    <name type="scientific">Gallus gallus</name>
    <name type="common">Chicken</name>
    <dbReference type="NCBI Taxonomy" id="9031"/>
</organismHost>
<organismHost>
    <name type="scientific">Meleagris gallopavo</name>
    <name type="common">Wild turkey</name>
    <dbReference type="NCBI Taxonomy" id="9103"/>
</organismHost>
<keyword id="KW-0002">3D-structure</keyword>
<keyword id="KW-0167">Capsid protein</keyword>
<keyword id="KW-1035">Host cytoplasm</keyword>
<keyword id="KW-0378">Hydrolase</keyword>
<keyword id="KW-0479">Metal-binding</keyword>
<keyword id="KW-0645">Protease</keyword>
<keyword id="KW-0720">Serine protease</keyword>
<keyword id="KW-1146">T=13 icosahedral capsid protein</keyword>
<keyword id="KW-0946">Virion</keyword>
<proteinExistence type="evidence at protein level"/>
<comment type="function">
    <text evidence="1">Capsid protein VP2 self assembles to form an icosahedral capsid with a T=13 symmetry, about 70 nm in diameter, and consisting of 260 VP2 trimers. The capsid encapsulates the genomic dsRNA. VP2 is also involved in attachment and entry into the host cell by interacting with host ITGA4/ITGB1 (By similarity).</text>
</comment>
<comment type="function">
    <text evidence="1">The precursor of VP2 plays an important role in capsid assembly. First, pre-VP2 and VP2 oligomers assemble to form a procapsid. Then, the pre-VP2 intermediates may be processed into VP2 proteins by proteolytic cleavage mediated by VP4 to obtain the mature virion. The final capsid is composed of pentamers and hexamers but VP2 has a natural tendency to assemble into all-pentameric structures. Therefore pre-VP2 may be required to allow formation of the hexameric structures (By similarity).</text>
</comment>
<comment type="function">
    <text evidence="2">Protease VP4 is a serine protease that cleaves the polyprotein into its final products. Pre-VP2 is first partially cleaved, and may be completely processed by VP4 upon capsid maturation.</text>
</comment>
<comment type="function">
    <text evidence="1">Capsid protein VP3 plays a key role in virion assembly by providing a scaffold for the capsid made of VP2. May self-assemble to form a T=4-like icosahedral inner-capsid composed of at least 180 trimers. Plays a role in genomic RNA packaging by recruiting VP1 into the capsid and interacting with the dsRNA genome segments to form a ribonucleoprotein complex. Additionally, the interaction of the VP3 C-terminal tail with VP1 removes the inherent structural blockade of the polymerase active site. Thus, VP3 can also function as a transcriptional activator (By similarity).</text>
</comment>
<comment type="function">
    <text>Structural peptide 1 is a small peptide derived from pre-VP2 C-terminus. It destabilizes and perforates cell membranes, suggesting a role during entry.</text>
</comment>
<comment type="function">
    <text evidence="1">Structural peptide 2 is a small peptide derived from pre-VP2 C-terminus. It is not essential for the virus viability, but viral growth is affected when missing (By similarity).</text>
</comment>
<comment type="function">
    <text evidence="1">Structural peptide 3 is a small peptide derived from pre-VP2 C-terminus. It is not essential for the virus viability, but viral growth is affected when missing (By similarity).</text>
</comment>
<comment type="function">
    <text evidence="1">Structural peptide 4 is a small peptide derived from pVP2 C-terminus. It is essential for the virus viability (By similarity).</text>
</comment>
<comment type="subunit">
    <molecule>Capsid protein VP2</molecule>
    <text evidence="1">Homotrimer. A central divalent metal stabilizes the VP2 trimer (By similarity). Interacts with host ITGA4/ITGB1.</text>
</comment>
<comment type="subunit">
    <molecule>Capsid protein VP3</molecule>
    <text evidence="1">Homodimer. Interacts (via C-terminus) with VP1 in the cytoplasm. Interacts with VP2 (By similarity).</text>
</comment>
<comment type="interaction">
    <interactant intactId="EBI-15554394">
        <id>P61825</id>
    </interactant>
    <interactant intactId="EBI-15554394">
        <id>P61825</id>
        <label>-</label>
    </interactant>
    <organismsDiffer>false</organismsDiffer>
    <experiments>3</experiments>
</comment>
<comment type="subcellular location">
    <molecule>Capsid protein VP2</molecule>
    <subcellularLocation>
        <location evidence="4">Virion</location>
    </subcellularLocation>
    <subcellularLocation>
        <location evidence="4">Host cytoplasm</location>
    </subcellularLocation>
</comment>
<comment type="subcellular location">
    <molecule>Capsid protein VP3</molecule>
    <subcellularLocation>
        <location evidence="4">Virion</location>
    </subcellularLocation>
    <subcellularLocation>
        <location evidence="4">Host cytoplasm</location>
    </subcellularLocation>
</comment>
<comment type="subcellular location">
    <molecule>Structural peptide 1</molecule>
    <subcellularLocation>
        <location evidence="4">Virion</location>
    </subcellularLocation>
    <subcellularLocation>
        <location evidence="4">Host cytoplasm</location>
    </subcellularLocation>
</comment>
<comment type="subcellular location">
    <molecule>Structural peptide 2</molecule>
    <subcellularLocation>
        <location evidence="4">Virion</location>
    </subcellularLocation>
    <subcellularLocation>
        <location evidence="4">Host cytoplasm</location>
    </subcellularLocation>
</comment>
<comment type="subcellular location">
    <molecule>Structural peptide 3</molecule>
    <subcellularLocation>
        <location evidence="4">Virion</location>
    </subcellularLocation>
    <subcellularLocation>
        <location evidence="4">Host cytoplasm</location>
    </subcellularLocation>
</comment>
<comment type="subcellular location">
    <molecule>Structural peptide 4</molecule>
    <subcellularLocation>
        <location evidence="4">Virion</location>
    </subcellularLocation>
    <subcellularLocation>
        <location evidence="4">Host cytoplasm</location>
    </subcellularLocation>
</comment>
<comment type="PTM">
    <text evidence="1">Specific enzymatic cleavages yield mature proteins. The capsid assembly seems to be regulated by polyprotein processing. The protease VP4 cleaves itself off the polyprotein, thus releasing pre-VP2 and VP3 within the infected cell. During capsid assembly, the C-terminus of pre-VP2 is further processed by VP4, giving rise to VP2, the external capsid protein and three small peptides that all stay closely associated with the capsid (By similarity).</text>
</comment>
<comment type="miscellaneous">
    <text>The sequence shown is that of isolate CEF94.</text>
</comment>
<sequence>MTNLQDQTQQIVPFIRSLLMPTTGPASIPDDTLEKHTLRSETSTYNLTVGDTGSGLIVFFPGFPGSIVGAHYTLQSNGNYKFDQMLLTAQNLPASYNYCRLVSRSLTVRSSTLPGGVYALNGTINAVTFQGSLSELTDVSYNGLMSATANINDKIGNVLVGEGVTVLSLPTSYDLGYVRLGDPIPAIGLDPKMVATCDSSDRPRVYTITAADDYQFSSQYQPGGVTITLFSANIDAITSLSVGGELVFQTSVHGLVLGATIYLIGFDGTAVITRAVAANNGLTTGTDNLLPFNLVIPTNEITQPITSIKLEIVTSKSGGQAGDQMSWSARGSLAVTIHGGNYPGALRPVTLVAYERVATGSVVTVAGVSNFELIPNPELAKNLVTEYGRFDPGAMNYTKLILSERDRLGIKTVWPTREYTDFREYFMEVADLNSPLKIAGAFGFKDIIRAIRRIAVPVVSTLFPPAAPLAHAIGEGVDYLLGDEAQAASGTARAASGKARAASGRIRQLTLAADKGYEVVANLFQVPQNPVVDGILASPGVLRGAHNLDCVLREGATLFPVVITTVEDAMTPKALNSKMFAVIEGVREDLQPPSQRGSFIRTLSGHRVYGYAPDGVLPLETGRDYTVVPIDDVWDDSIMLSKDPIPPIVGNSGNLAIAYMDVFRPKVPIHVAMTGALNACGEIEKVSFRSTKLATAHRLGLKLAGPGAFDVNTGPNWATFIKRFPHNPRDWDRLPYLNLPYLPPNAGRQYHLAMAASEFKETPELESAVRAMEAAANVDPLFQSALSVFMWLEENGIVTDMANFALSDPNAHRMRNFLANAPQAGSKSQRAKYGTAGYGVEARGPTPEEAQREKDTRISKKMETMGIYFATPEWVALNGHRGPSPGQLKYWQNTREIPDPNEDYLDYVHAEKSRLASEEQILRAATSIYGAPGQAEPPQAFIDEVAKVYEINHGRGPNQEQMKDLLLTAMEMKHRNPRRALPKPKPKPNAPTQRPPGRLGRWIRTVSDEDLE</sequence>
<accession>P61825</accession>
<accession>Q9Q6Q6</accession>
<dbReference type="EC" id="3.4.21.-"/>
<dbReference type="EMBL" id="AF194428">
    <property type="protein sequence ID" value="AAF16082.1"/>
    <property type="molecule type" value="mRNA"/>
</dbReference>
<dbReference type="EMBL" id="AJ621158">
    <property type="protein sequence ID" value="CAF18300.1"/>
    <property type="molecule type" value="Genomic_RNA"/>
</dbReference>
<dbReference type="PDB" id="2GSY">
    <property type="method" value="X-ray"/>
    <property type="resolution" value="2.60 A"/>
    <property type="chains" value="A/B/C/D/E/F/G/H/I/J/K/L/M/N/O/P/Q/R/S/T=1-456"/>
</dbReference>
<dbReference type="PDB" id="2IMU">
    <property type="method" value="NMR"/>
    <property type="chains" value="A=442-487"/>
</dbReference>
<dbReference type="PDB" id="3FBM">
    <property type="method" value="X-ray"/>
    <property type="resolution" value="3.10 A"/>
    <property type="chains" value="A=6-452"/>
</dbReference>
<dbReference type="PDB" id="9EQN">
    <property type="method" value="X-ray"/>
    <property type="resolution" value="1.46 A"/>
    <property type="chains" value="A/B/C/D=755-823"/>
</dbReference>
<dbReference type="PDB" id="9EQO">
    <property type="method" value="X-ray"/>
    <property type="resolution" value="1.34 A"/>
    <property type="chains" value="A/B=757-821"/>
</dbReference>
<dbReference type="PDB" id="9EQP">
    <property type="method" value="X-ray"/>
    <property type="resolution" value="3.50 A"/>
    <property type="chains" value="A/B/C/D/E/F/G/I=846-976"/>
</dbReference>
<dbReference type="PDBsum" id="2GSY"/>
<dbReference type="PDBsum" id="2IMU"/>
<dbReference type="PDBsum" id="3FBM"/>
<dbReference type="PDBsum" id="9EQN"/>
<dbReference type="PDBsum" id="9EQO"/>
<dbReference type="PDBsum" id="9EQP"/>
<dbReference type="SASBDB" id="P61825"/>
<dbReference type="SMR" id="P61825"/>
<dbReference type="DIP" id="DIP-29594N"/>
<dbReference type="MEROPS" id="S50.002"/>
<dbReference type="TCDB" id="1.A.59.1.1">
    <property type="family name" value="the bursal disease virus pore-forming peptide, pep46 (pep46) family"/>
</dbReference>
<dbReference type="EvolutionaryTrace" id="P61825"/>
<dbReference type="GO" id="GO:0030430">
    <property type="term" value="C:host cell cytoplasm"/>
    <property type="evidence" value="ECO:0007669"/>
    <property type="project" value="UniProtKB-SubCell"/>
</dbReference>
<dbReference type="GO" id="GO:0039621">
    <property type="term" value="C:T=13 icosahedral viral capsid"/>
    <property type="evidence" value="ECO:0007669"/>
    <property type="project" value="UniProtKB-KW"/>
</dbReference>
<dbReference type="GO" id="GO:0042802">
    <property type="term" value="F:identical protein binding"/>
    <property type="evidence" value="ECO:0000353"/>
    <property type="project" value="IntAct"/>
</dbReference>
<dbReference type="GO" id="GO:0046872">
    <property type="term" value="F:metal ion binding"/>
    <property type="evidence" value="ECO:0007669"/>
    <property type="project" value="UniProtKB-KW"/>
</dbReference>
<dbReference type="GO" id="GO:0008236">
    <property type="term" value="F:serine-type peptidase activity"/>
    <property type="evidence" value="ECO:0007669"/>
    <property type="project" value="UniProtKB-KW"/>
</dbReference>
<dbReference type="GO" id="GO:0005198">
    <property type="term" value="F:structural molecule activity"/>
    <property type="evidence" value="ECO:0007669"/>
    <property type="project" value="InterPro"/>
</dbReference>
<dbReference type="GO" id="GO:0006508">
    <property type="term" value="P:proteolysis"/>
    <property type="evidence" value="ECO:0007669"/>
    <property type="project" value="UniProtKB-KW"/>
</dbReference>
<dbReference type="FunFam" id="2.60.120.660:FF:000001">
    <property type="entry name" value="Structural polyprotein"/>
    <property type="match status" value="1"/>
</dbReference>
<dbReference type="Gene3D" id="2.60.120.20">
    <property type="match status" value="1"/>
</dbReference>
<dbReference type="Gene3D" id="6.10.250.1030">
    <property type="match status" value="1"/>
</dbReference>
<dbReference type="Gene3D" id="1.10.8.880">
    <property type="entry name" value="Birnavirus VP3 protein, domain 2"/>
    <property type="match status" value="1"/>
</dbReference>
<dbReference type="Gene3D" id="1.10.150.620">
    <property type="entry name" value="Capsid protein VP3, domain 1"/>
    <property type="match status" value="1"/>
</dbReference>
<dbReference type="Gene3D" id="2.60.120.660">
    <property type="entry name" value="icosahedral virus"/>
    <property type="match status" value="1"/>
</dbReference>
<dbReference type="InterPro" id="IPR002662">
    <property type="entry name" value="Birna_VP2"/>
</dbReference>
<dbReference type="InterPro" id="IPR002663">
    <property type="entry name" value="Birna_VP3"/>
</dbReference>
<dbReference type="InterPro" id="IPR043048">
    <property type="entry name" value="Birna_VP3_dom1"/>
</dbReference>
<dbReference type="InterPro" id="IPR043049">
    <property type="entry name" value="Birna_VP3_dom2"/>
</dbReference>
<dbReference type="InterPro" id="IPR025775">
    <property type="entry name" value="Birna_VP4_Prtase_dom"/>
</dbReference>
<dbReference type="InterPro" id="IPR029053">
    <property type="entry name" value="Viral_coat"/>
</dbReference>
<dbReference type="Pfam" id="PF01766">
    <property type="entry name" value="Birna_VP2"/>
    <property type="match status" value="1"/>
</dbReference>
<dbReference type="Pfam" id="PF01767">
    <property type="entry name" value="Birna_VP3"/>
    <property type="match status" value="1"/>
</dbReference>
<dbReference type="Pfam" id="PF01768">
    <property type="entry name" value="Birna_VP4"/>
    <property type="match status" value="1"/>
</dbReference>
<dbReference type="SUPFAM" id="SSF88633">
    <property type="entry name" value="Positive stranded ssRNA viruses"/>
    <property type="match status" value="1"/>
</dbReference>
<dbReference type="PROSITE" id="PS51548">
    <property type="entry name" value="BIRNAVIRUS_VP4_PRO"/>
    <property type="match status" value="1"/>
</dbReference>
<organism>
    <name type="scientific">Avian infectious bursal disease virus</name>
    <name type="common">IBDV</name>
    <name type="synonym">Gumboro disease virus</name>
    <dbReference type="NCBI Taxonomy" id="10995"/>
    <lineage>
        <taxon>Viruses</taxon>
        <taxon>Riboviria</taxon>
        <taxon>Orthornavirae</taxon>
        <taxon>Birnaviridae</taxon>
        <taxon>Avibirnavirus</taxon>
        <taxon>Avibirnavirus gumboroense</taxon>
    </lineage>
</organism>